<reference key="1">
    <citation type="journal article" date="2006" name="J. Bacteriol.">
        <title>Comparative genomic evidence for a close relationship between the dimorphic prosthecate bacteria Hyphomonas neptunium and Caulobacter crescentus.</title>
        <authorList>
            <person name="Badger J.H."/>
            <person name="Hoover T.R."/>
            <person name="Brun Y.V."/>
            <person name="Weiner R.M."/>
            <person name="Laub M.T."/>
            <person name="Alexandre G."/>
            <person name="Mrazek J."/>
            <person name="Ren Q."/>
            <person name="Paulsen I.T."/>
            <person name="Nelson K.E."/>
            <person name="Khouri H.M."/>
            <person name="Radune D."/>
            <person name="Sosa J."/>
            <person name="Dodson R.J."/>
            <person name="Sullivan S.A."/>
            <person name="Rosovitz M.J."/>
            <person name="Madupu R."/>
            <person name="Brinkac L.M."/>
            <person name="Durkin A.S."/>
            <person name="Daugherty S.C."/>
            <person name="Kothari S.P."/>
            <person name="Giglio M.G."/>
            <person name="Zhou L."/>
            <person name="Haft D.H."/>
            <person name="Selengut J.D."/>
            <person name="Davidsen T.M."/>
            <person name="Yang Q."/>
            <person name="Zafar N."/>
            <person name="Ward N.L."/>
        </authorList>
    </citation>
    <scope>NUCLEOTIDE SEQUENCE [LARGE SCALE GENOMIC DNA]</scope>
    <source>
        <strain>ATCC 15444</strain>
    </source>
</reference>
<sequence length="312" mass="34130">MKLISCNANRPLSDAIADYLDMRLTRSEVKTFADQEIFVRIDENVRGEDVFVIQSTSYPANDNLMQLLIMMDALRRASARRITAVIPYFGYARQDRKTDGRTPISAKLVANLISTAGADRVLTVDLHAGQIQGFFDIPTDNLFGGPVMVDDIKERYGKEKIIVVSPDVGGVVRARSLAKRLDDADLAIVDKRRPEAGKSEVMNIIGDVRGARCIMLDDMCDSGGTLANAAAALKEHGASSVSAYVTHGVLSGSAVERIEKSVLDELVMTDTIQPSEHALKSKNIRVLPISPLLGEAIRRIANEESVSKLFDR</sequence>
<evidence type="ECO:0000255" key="1">
    <source>
        <dbReference type="HAMAP-Rule" id="MF_00583"/>
    </source>
</evidence>
<accession>Q0C5A1</accession>
<feature type="chain" id="PRO_1000025452" description="Ribose-phosphate pyrophosphokinase">
    <location>
        <begin position="1"/>
        <end position="312"/>
    </location>
</feature>
<feature type="active site" evidence="1">
    <location>
        <position position="191"/>
    </location>
</feature>
<feature type="binding site" evidence="1">
    <location>
        <begin position="34"/>
        <end position="36"/>
    </location>
    <ligand>
        <name>ATP</name>
        <dbReference type="ChEBI" id="CHEBI:30616"/>
    </ligand>
</feature>
<feature type="binding site" evidence="1">
    <location>
        <begin position="93"/>
        <end position="94"/>
    </location>
    <ligand>
        <name>ATP</name>
        <dbReference type="ChEBI" id="CHEBI:30616"/>
    </ligand>
</feature>
<feature type="binding site" evidence="1">
    <location>
        <position position="127"/>
    </location>
    <ligand>
        <name>Mg(2+)</name>
        <dbReference type="ChEBI" id="CHEBI:18420"/>
        <label>1</label>
    </ligand>
</feature>
<feature type="binding site" evidence="1">
    <location>
        <position position="167"/>
    </location>
    <ligand>
        <name>Mg(2+)</name>
        <dbReference type="ChEBI" id="CHEBI:18420"/>
        <label>2</label>
    </ligand>
</feature>
<feature type="binding site" evidence="1">
    <location>
        <position position="193"/>
    </location>
    <ligand>
        <name>D-ribose 5-phosphate</name>
        <dbReference type="ChEBI" id="CHEBI:78346"/>
    </ligand>
</feature>
<feature type="binding site" evidence="1">
    <location>
        <position position="217"/>
    </location>
    <ligand>
        <name>D-ribose 5-phosphate</name>
        <dbReference type="ChEBI" id="CHEBI:78346"/>
    </ligand>
</feature>
<feature type="binding site" evidence="1">
    <location>
        <begin position="221"/>
        <end position="225"/>
    </location>
    <ligand>
        <name>D-ribose 5-phosphate</name>
        <dbReference type="ChEBI" id="CHEBI:78346"/>
    </ligand>
</feature>
<dbReference type="EC" id="2.7.6.1" evidence="1"/>
<dbReference type="EMBL" id="CP000158">
    <property type="protein sequence ID" value="ABI78005.1"/>
    <property type="molecule type" value="Genomic_DNA"/>
</dbReference>
<dbReference type="RefSeq" id="WP_011645392.1">
    <property type="nucleotide sequence ID" value="NC_008358.1"/>
</dbReference>
<dbReference type="SMR" id="Q0C5A1"/>
<dbReference type="STRING" id="228405.HNE_0362"/>
<dbReference type="KEGG" id="hne:HNE_0362"/>
<dbReference type="eggNOG" id="COG0462">
    <property type="taxonomic scope" value="Bacteria"/>
</dbReference>
<dbReference type="HOGENOM" id="CLU_033546_2_0_5"/>
<dbReference type="UniPathway" id="UPA00087">
    <property type="reaction ID" value="UER00172"/>
</dbReference>
<dbReference type="Proteomes" id="UP000001959">
    <property type="component" value="Chromosome"/>
</dbReference>
<dbReference type="GO" id="GO:0005737">
    <property type="term" value="C:cytoplasm"/>
    <property type="evidence" value="ECO:0007669"/>
    <property type="project" value="UniProtKB-SubCell"/>
</dbReference>
<dbReference type="GO" id="GO:0002189">
    <property type="term" value="C:ribose phosphate diphosphokinase complex"/>
    <property type="evidence" value="ECO:0007669"/>
    <property type="project" value="TreeGrafter"/>
</dbReference>
<dbReference type="GO" id="GO:0005524">
    <property type="term" value="F:ATP binding"/>
    <property type="evidence" value="ECO:0007669"/>
    <property type="project" value="UniProtKB-KW"/>
</dbReference>
<dbReference type="GO" id="GO:0016301">
    <property type="term" value="F:kinase activity"/>
    <property type="evidence" value="ECO:0007669"/>
    <property type="project" value="UniProtKB-KW"/>
</dbReference>
<dbReference type="GO" id="GO:0000287">
    <property type="term" value="F:magnesium ion binding"/>
    <property type="evidence" value="ECO:0007669"/>
    <property type="project" value="UniProtKB-UniRule"/>
</dbReference>
<dbReference type="GO" id="GO:0004749">
    <property type="term" value="F:ribose phosphate diphosphokinase activity"/>
    <property type="evidence" value="ECO:0007669"/>
    <property type="project" value="UniProtKB-UniRule"/>
</dbReference>
<dbReference type="GO" id="GO:0006015">
    <property type="term" value="P:5-phosphoribose 1-diphosphate biosynthetic process"/>
    <property type="evidence" value="ECO:0007669"/>
    <property type="project" value="UniProtKB-UniRule"/>
</dbReference>
<dbReference type="GO" id="GO:0006164">
    <property type="term" value="P:purine nucleotide biosynthetic process"/>
    <property type="evidence" value="ECO:0007669"/>
    <property type="project" value="TreeGrafter"/>
</dbReference>
<dbReference type="GO" id="GO:0009156">
    <property type="term" value="P:ribonucleoside monophosphate biosynthetic process"/>
    <property type="evidence" value="ECO:0007669"/>
    <property type="project" value="InterPro"/>
</dbReference>
<dbReference type="CDD" id="cd06223">
    <property type="entry name" value="PRTases_typeI"/>
    <property type="match status" value="1"/>
</dbReference>
<dbReference type="FunFam" id="3.40.50.2020:FF:000001">
    <property type="entry name" value="Ribose-phosphate pyrophosphokinase"/>
    <property type="match status" value="1"/>
</dbReference>
<dbReference type="Gene3D" id="3.40.50.2020">
    <property type="match status" value="2"/>
</dbReference>
<dbReference type="HAMAP" id="MF_00583_B">
    <property type="entry name" value="RibP_PPkinase_B"/>
    <property type="match status" value="1"/>
</dbReference>
<dbReference type="InterPro" id="IPR000842">
    <property type="entry name" value="PRib_PP_synth_CS"/>
</dbReference>
<dbReference type="InterPro" id="IPR029099">
    <property type="entry name" value="Pribosyltran_N"/>
</dbReference>
<dbReference type="InterPro" id="IPR000836">
    <property type="entry name" value="PRibTrfase_dom"/>
</dbReference>
<dbReference type="InterPro" id="IPR029057">
    <property type="entry name" value="PRTase-like"/>
</dbReference>
<dbReference type="InterPro" id="IPR005946">
    <property type="entry name" value="Rib-P_diPkinase"/>
</dbReference>
<dbReference type="InterPro" id="IPR037515">
    <property type="entry name" value="Rib-P_diPkinase_bac"/>
</dbReference>
<dbReference type="NCBIfam" id="NF002320">
    <property type="entry name" value="PRK01259.1"/>
    <property type="match status" value="1"/>
</dbReference>
<dbReference type="NCBIfam" id="TIGR01251">
    <property type="entry name" value="ribP_PPkin"/>
    <property type="match status" value="1"/>
</dbReference>
<dbReference type="PANTHER" id="PTHR10210">
    <property type="entry name" value="RIBOSE-PHOSPHATE DIPHOSPHOKINASE FAMILY MEMBER"/>
    <property type="match status" value="1"/>
</dbReference>
<dbReference type="PANTHER" id="PTHR10210:SF41">
    <property type="entry name" value="RIBOSE-PHOSPHATE PYROPHOSPHOKINASE 1, CHLOROPLASTIC"/>
    <property type="match status" value="1"/>
</dbReference>
<dbReference type="Pfam" id="PF14572">
    <property type="entry name" value="Pribosyl_synth"/>
    <property type="match status" value="1"/>
</dbReference>
<dbReference type="Pfam" id="PF13793">
    <property type="entry name" value="Pribosyltran_N"/>
    <property type="match status" value="1"/>
</dbReference>
<dbReference type="SMART" id="SM01400">
    <property type="entry name" value="Pribosyltran_N"/>
    <property type="match status" value="1"/>
</dbReference>
<dbReference type="SUPFAM" id="SSF53271">
    <property type="entry name" value="PRTase-like"/>
    <property type="match status" value="1"/>
</dbReference>
<dbReference type="PROSITE" id="PS00114">
    <property type="entry name" value="PRPP_SYNTHASE"/>
    <property type="match status" value="1"/>
</dbReference>
<comment type="function">
    <text evidence="1">Involved in the biosynthesis of the central metabolite phospho-alpha-D-ribosyl-1-pyrophosphate (PRPP) via the transfer of pyrophosphoryl group from ATP to 1-hydroxyl of ribose-5-phosphate (Rib-5-P).</text>
</comment>
<comment type="catalytic activity">
    <reaction evidence="1">
        <text>D-ribose 5-phosphate + ATP = 5-phospho-alpha-D-ribose 1-diphosphate + AMP + H(+)</text>
        <dbReference type="Rhea" id="RHEA:15609"/>
        <dbReference type="ChEBI" id="CHEBI:15378"/>
        <dbReference type="ChEBI" id="CHEBI:30616"/>
        <dbReference type="ChEBI" id="CHEBI:58017"/>
        <dbReference type="ChEBI" id="CHEBI:78346"/>
        <dbReference type="ChEBI" id="CHEBI:456215"/>
        <dbReference type="EC" id="2.7.6.1"/>
    </reaction>
</comment>
<comment type="cofactor">
    <cofactor evidence="1">
        <name>Mg(2+)</name>
        <dbReference type="ChEBI" id="CHEBI:18420"/>
    </cofactor>
    <text evidence="1">Binds 2 Mg(2+) ions per subunit.</text>
</comment>
<comment type="pathway">
    <text evidence="1">Metabolic intermediate biosynthesis; 5-phospho-alpha-D-ribose 1-diphosphate biosynthesis; 5-phospho-alpha-D-ribose 1-diphosphate from D-ribose 5-phosphate (route I): step 1/1.</text>
</comment>
<comment type="subunit">
    <text evidence="1">Homohexamer.</text>
</comment>
<comment type="subcellular location">
    <subcellularLocation>
        <location evidence="1">Cytoplasm</location>
    </subcellularLocation>
</comment>
<comment type="similarity">
    <text evidence="1">Belongs to the ribose-phosphate pyrophosphokinase family. Class I subfamily.</text>
</comment>
<gene>
    <name evidence="1" type="primary">prs</name>
    <name type="ordered locus">HNE_0362</name>
</gene>
<proteinExistence type="inferred from homology"/>
<protein>
    <recommendedName>
        <fullName evidence="1">Ribose-phosphate pyrophosphokinase</fullName>
        <shortName evidence="1">RPPK</shortName>
        <ecNumber evidence="1">2.7.6.1</ecNumber>
    </recommendedName>
    <alternativeName>
        <fullName evidence="1">5-phospho-D-ribosyl alpha-1-diphosphate synthase</fullName>
    </alternativeName>
    <alternativeName>
        <fullName evidence="1">Phosphoribosyl diphosphate synthase</fullName>
    </alternativeName>
    <alternativeName>
        <fullName evidence="1">Phosphoribosyl pyrophosphate synthase</fullName>
        <shortName evidence="1">P-Rib-PP synthase</shortName>
        <shortName evidence="1">PRPP synthase</shortName>
        <shortName evidence="1">PRPPase</shortName>
    </alternativeName>
</protein>
<keyword id="KW-0067">ATP-binding</keyword>
<keyword id="KW-0963">Cytoplasm</keyword>
<keyword id="KW-0418">Kinase</keyword>
<keyword id="KW-0460">Magnesium</keyword>
<keyword id="KW-0479">Metal-binding</keyword>
<keyword id="KW-0545">Nucleotide biosynthesis</keyword>
<keyword id="KW-0547">Nucleotide-binding</keyword>
<keyword id="KW-1185">Reference proteome</keyword>
<keyword id="KW-0808">Transferase</keyword>
<name>KPRS_HYPNA</name>
<organism>
    <name type="scientific">Hyphomonas neptunium (strain ATCC 15444)</name>
    <dbReference type="NCBI Taxonomy" id="228405"/>
    <lineage>
        <taxon>Bacteria</taxon>
        <taxon>Pseudomonadati</taxon>
        <taxon>Pseudomonadota</taxon>
        <taxon>Alphaproteobacteria</taxon>
        <taxon>Hyphomonadales</taxon>
        <taxon>Hyphomonadaceae</taxon>
        <taxon>Hyphomonas</taxon>
    </lineage>
</organism>